<keyword id="KW-0223">Dioxygenase</keyword>
<keyword id="KW-0408">Iron</keyword>
<keyword id="KW-0479">Metal-binding</keyword>
<keyword id="KW-0560">Oxidoreductase</keyword>
<keyword id="KW-1185">Reference proteome</keyword>
<keyword id="KW-0847">Vitamin C</keyword>
<name>Y037_PARL1</name>
<sequence>MFIEIAGILGAADLRLADTVFAQKDAFESGARTAGRIARAVKNNEQAKPAGLAADLTMLVEKRLMKNDVFRAAARPRNFIRILLSRYTQGMAYGLHSDDAFMERQRVDLSFTLFLSPPESYEGGELIVEEPAGERLVKLEAGSLVLYPSATLHRVAEVTSGERRAAVGWIRSLVRSAEDRETLFDVALALRQAEAAGDRALTDRLLKIQGSLLRRWGED</sequence>
<feature type="chain" id="PRO_0000346497" description="PKHD-type hydroxylase Plav_0037">
    <location>
        <begin position="1"/>
        <end position="219"/>
    </location>
</feature>
<feature type="domain" description="Fe2OG dioxygenase" evidence="1">
    <location>
        <begin position="78"/>
        <end position="172"/>
    </location>
</feature>
<feature type="binding site" evidence="1">
    <location>
        <position position="96"/>
    </location>
    <ligand>
        <name>Fe cation</name>
        <dbReference type="ChEBI" id="CHEBI:24875"/>
    </ligand>
</feature>
<feature type="binding site" evidence="1">
    <location>
        <position position="98"/>
    </location>
    <ligand>
        <name>Fe cation</name>
        <dbReference type="ChEBI" id="CHEBI:24875"/>
    </ligand>
</feature>
<feature type="binding site" evidence="1">
    <location>
        <position position="153"/>
    </location>
    <ligand>
        <name>Fe cation</name>
        <dbReference type="ChEBI" id="CHEBI:24875"/>
    </ligand>
</feature>
<feature type="binding site" evidence="1">
    <location>
        <position position="163"/>
    </location>
    <ligand>
        <name>2-oxoglutarate</name>
        <dbReference type="ChEBI" id="CHEBI:16810"/>
    </ligand>
</feature>
<organism>
    <name type="scientific">Parvibaculum lavamentivorans (strain DS-1 / DSM 13023 / NCIMB 13966)</name>
    <dbReference type="NCBI Taxonomy" id="402881"/>
    <lineage>
        <taxon>Bacteria</taxon>
        <taxon>Pseudomonadati</taxon>
        <taxon>Pseudomonadota</taxon>
        <taxon>Alphaproteobacteria</taxon>
        <taxon>Hyphomicrobiales</taxon>
        <taxon>Parvibaculaceae</taxon>
        <taxon>Parvibaculum</taxon>
    </lineage>
</organism>
<gene>
    <name type="ordered locus">Plav_0037</name>
</gene>
<proteinExistence type="inferred from homology"/>
<protein>
    <recommendedName>
        <fullName evidence="1">PKHD-type hydroxylase Plav_0037</fullName>
        <ecNumber evidence="1">1.14.11.-</ecNumber>
    </recommendedName>
</protein>
<reference key="1">
    <citation type="journal article" date="2011" name="Stand. Genomic Sci.">
        <title>Complete genome sequence of Parvibaculum lavamentivorans type strain (DS-1(T)).</title>
        <authorList>
            <person name="Schleheck D."/>
            <person name="Weiss M."/>
            <person name="Pitluck S."/>
            <person name="Bruce D."/>
            <person name="Land M.L."/>
            <person name="Han S."/>
            <person name="Saunders E."/>
            <person name="Tapia R."/>
            <person name="Detter C."/>
            <person name="Brettin T."/>
            <person name="Han J."/>
            <person name="Woyke T."/>
            <person name="Goodwin L."/>
            <person name="Pennacchio L."/>
            <person name="Nolan M."/>
            <person name="Cook A.M."/>
            <person name="Kjelleberg S."/>
            <person name="Thomas T."/>
        </authorList>
    </citation>
    <scope>NUCLEOTIDE SEQUENCE [LARGE SCALE GENOMIC DNA]</scope>
    <source>
        <strain>DS-1 / DSM 13023 / NCIMB 13966</strain>
    </source>
</reference>
<accession>A7HP27</accession>
<comment type="cofactor">
    <cofactor evidence="1">
        <name>Fe(2+)</name>
        <dbReference type="ChEBI" id="CHEBI:29033"/>
    </cofactor>
    <text evidence="1">Binds 1 Fe(2+) ion per subunit.</text>
</comment>
<comment type="cofactor">
    <cofactor evidence="1">
        <name>L-ascorbate</name>
        <dbReference type="ChEBI" id="CHEBI:38290"/>
    </cofactor>
</comment>
<dbReference type="EC" id="1.14.11.-" evidence="1"/>
<dbReference type="EMBL" id="CP000774">
    <property type="protein sequence ID" value="ABS61660.1"/>
    <property type="molecule type" value="Genomic_DNA"/>
</dbReference>
<dbReference type="RefSeq" id="WP_011994951.1">
    <property type="nucleotide sequence ID" value="NC_009719.1"/>
</dbReference>
<dbReference type="SMR" id="A7HP27"/>
<dbReference type="STRING" id="402881.Plav_0037"/>
<dbReference type="KEGG" id="pla:Plav_0037"/>
<dbReference type="eggNOG" id="COG3128">
    <property type="taxonomic scope" value="Bacteria"/>
</dbReference>
<dbReference type="HOGENOM" id="CLU_106663_0_0_5"/>
<dbReference type="OrthoDB" id="9812472at2"/>
<dbReference type="Proteomes" id="UP000006377">
    <property type="component" value="Chromosome"/>
</dbReference>
<dbReference type="GO" id="GO:0016706">
    <property type="term" value="F:2-oxoglutarate-dependent dioxygenase activity"/>
    <property type="evidence" value="ECO:0007669"/>
    <property type="project" value="UniProtKB-UniRule"/>
</dbReference>
<dbReference type="GO" id="GO:0005506">
    <property type="term" value="F:iron ion binding"/>
    <property type="evidence" value="ECO:0007669"/>
    <property type="project" value="UniProtKB-UniRule"/>
</dbReference>
<dbReference type="GO" id="GO:0031418">
    <property type="term" value="F:L-ascorbic acid binding"/>
    <property type="evidence" value="ECO:0007669"/>
    <property type="project" value="UniProtKB-KW"/>
</dbReference>
<dbReference type="GO" id="GO:0006974">
    <property type="term" value="P:DNA damage response"/>
    <property type="evidence" value="ECO:0007669"/>
    <property type="project" value="TreeGrafter"/>
</dbReference>
<dbReference type="GO" id="GO:0006879">
    <property type="term" value="P:intracellular iron ion homeostasis"/>
    <property type="evidence" value="ECO:0007669"/>
    <property type="project" value="TreeGrafter"/>
</dbReference>
<dbReference type="Gene3D" id="2.60.120.620">
    <property type="entry name" value="q2cbj1_9rhob like domain"/>
    <property type="match status" value="1"/>
</dbReference>
<dbReference type="HAMAP" id="MF_00657">
    <property type="entry name" value="Hydroxyl_YbiX"/>
    <property type="match status" value="1"/>
</dbReference>
<dbReference type="InterPro" id="IPR005123">
    <property type="entry name" value="Oxoglu/Fe-dep_dioxygenase_dom"/>
</dbReference>
<dbReference type="InterPro" id="IPR023550">
    <property type="entry name" value="PKHD_hydroxylase"/>
</dbReference>
<dbReference type="InterPro" id="IPR006620">
    <property type="entry name" value="Pro_4_hyd_alph"/>
</dbReference>
<dbReference type="InterPro" id="IPR044862">
    <property type="entry name" value="Pro_4_hyd_alph_FE2OG_OXY"/>
</dbReference>
<dbReference type="NCBIfam" id="NF003974">
    <property type="entry name" value="PRK05467.1-3"/>
    <property type="match status" value="1"/>
</dbReference>
<dbReference type="PANTHER" id="PTHR41536">
    <property type="entry name" value="PKHD-TYPE HYDROXYLASE YBIX"/>
    <property type="match status" value="1"/>
</dbReference>
<dbReference type="PANTHER" id="PTHR41536:SF1">
    <property type="entry name" value="PKHD-TYPE HYDROXYLASE YBIX"/>
    <property type="match status" value="1"/>
</dbReference>
<dbReference type="Pfam" id="PF13640">
    <property type="entry name" value="2OG-FeII_Oxy_3"/>
    <property type="match status" value="1"/>
</dbReference>
<dbReference type="SMART" id="SM00702">
    <property type="entry name" value="P4Hc"/>
    <property type="match status" value="1"/>
</dbReference>
<dbReference type="PROSITE" id="PS51471">
    <property type="entry name" value="FE2OG_OXY"/>
    <property type="match status" value="1"/>
</dbReference>
<evidence type="ECO:0000255" key="1">
    <source>
        <dbReference type="HAMAP-Rule" id="MF_00657"/>
    </source>
</evidence>